<comment type="similarity">
    <text evidence="1">Belongs to the hssA/B family.</text>
</comment>
<keyword id="KW-1185">Reference proteome</keyword>
<dbReference type="EMBL" id="AAFI02000013">
    <property type="protein sequence ID" value="EAL69540.1"/>
    <property type="molecule type" value="Genomic_DNA"/>
</dbReference>
<dbReference type="RefSeq" id="XP_643410.1">
    <property type="nucleotide sequence ID" value="XM_638318.1"/>
</dbReference>
<dbReference type="FunCoup" id="Q86H94">
    <property type="interactions" value="99"/>
</dbReference>
<dbReference type="PaxDb" id="44689-DDB0252780"/>
<dbReference type="EnsemblProtists" id="EAL69540">
    <property type="protein sequence ID" value="EAL69540"/>
    <property type="gene ID" value="DDB_G0275579"/>
</dbReference>
<dbReference type="GeneID" id="8619996"/>
<dbReference type="KEGG" id="ddi:DDB_G0275579"/>
<dbReference type="dictyBase" id="DDB_G0275579"/>
<dbReference type="VEuPathDB" id="AmoebaDB:DDB_G0275579"/>
<dbReference type="HOGENOM" id="CLU_2404148_0_0_1"/>
<dbReference type="InParanoid" id="Q86H94"/>
<dbReference type="PRO" id="PR:Q86H94"/>
<dbReference type="Proteomes" id="UP000002195">
    <property type="component" value="Chromosome 2"/>
</dbReference>
<dbReference type="GO" id="GO:0030587">
    <property type="term" value="P:sorocarp development"/>
    <property type="evidence" value="ECO:0000318"/>
    <property type="project" value="GO_Central"/>
</dbReference>
<dbReference type="InterPro" id="IPR050533">
    <property type="entry name" value="HssA/B-like_chaperone"/>
</dbReference>
<dbReference type="InterPro" id="IPR008455">
    <property type="entry name" value="HssA/B-related"/>
</dbReference>
<dbReference type="PANTHER" id="PTHR31059">
    <property type="entry name" value="HSSA/B-LIKE PROTEIN 1-RELATED-RELATED"/>
    <property type="match status" value="1"/>
</dbReference>
<dbReference type="PANTHER" id="PTHR31059:SF5">
    <property type="entry name" value="HSSA_B-LIKE PROTEIN 1-RELATED"/>
    <property type="match status" value="1"/>
</dbReference>
<dbReference type="Pfam" id="PF05710">
    <property type="entry name" value="Coiled"/>
    <property type="match status" value="1"/>
</dbReference>
<protein>
    <recommendedName>
        <fullName>HssA/B-like protein 23</fullName>
    </recommendedName>
</protein>
<evidence type="ECO:0000305" key="1"/>
<accession>Q86H94</accession>
<accession>Q553K3</accession>
<proteinExistence type="inferred from homology"/>
<sequence length="93" mass="8966">MTIIASISKIGNIKSSSSSSIGSGRNSAISFGSNKIACGECGGSSNPMGSLIGNVANTGAGKVSHIPVTVMVDASVAMNPSSMLPSGGSCGCN</sequence>
<feature type="chain" id="PRO_0000330393" description="HssA/B-like protein 23">
    <location>
        <begin position="1"/>
        <end position="93"/>
    </location>
</feature>
<reference key="1">
    <citation type="journal article" date="2002" name="Nature">
        <title>Sequence and analysis of chromosome 2 of Dictyostelium discoideum.</title>
        <authorList>
            <person name="Gloeckner G."/>
            <person name="Eichinger L."/>
            <person name="Szafranski K."/>
            <person name="Pachebat J.A."/>
            <person name="Bankier A.T."/>
            <person name="Dear P.H."/>
            <person name="Lehmann R."/>
            <person name="Baumgart C."/>
            <person name="Parra G."/>
            <person name="Abril J.F."/>
            <person name="Guigo R."/>
            <person name="Kumpf K."/>
            <person name="Tunggal B."/>
            <person name="Cox E.C."/>
            <person name="Quail M.A."/>
            <person name="Platzer M."/>
            <person name="Rosenthal A."/>
            <person name="Noegel A.A."/>
        </authorList>
    </citation>
    <scope>NUCLEOTIDE SEQUENCE [LARGE SCALE GENOMIC DNA]</scope>
    <source>
        <strain>AX4</strain>
    </source>
</reference>
<reference key="2">
    <citation type="journal article" date="2005" name="Nature">
        <title>The genome of the social amoeba Dictyostelium discoideum.</title>
        <authorList>
            <person name="Eichinger L."/>
            <person name="Pachebat J.A."/>
            <person name="Gloeckner G."/>
            <person name="Rajandream M.A."/>
            <person name="Sucgang R."/>
            <person name="Berriman M."/>
            <person name="Song J."/>
            <person name="Olsen R."/>
            <person name="Szafranski K."/>
            <person name="Xu Q."/>
            <person name="Tunggal B."/>
            <person name="Kummerfeld S."/>
            <person name="Madera M."/>
            <person name="Konfortov B.A."/>
            <person name="Rivero F."/>
            <person name="Bankier A.T."/>
            <person name="Lehmann R."/>
            <person name="Hamlin N."/>
            <person name="Davies R."/>
            <person name="Gaudet P."/>
            <person name="Fey P."/>
            <person name="Pilcher K."/>
            <person name="Chen G."/>
            <person name="Saunders D."/>
            <person name="Sodergren E.J."/>
            <person name="Davis P."/>
            <person name="Kerhornou A."/>
            <person name="Nie X."/>
            <person name="Hall N."/>
            <person name="Anjard C."/>
            <person name="Hemphill L."/>
            <person name="Bason N."/>
            <person name="Farbrother P."/>
            <person name="Desany B."/>
            <person name="Just E."/>
            <person name="Morio T."/>
            <person name="Rost R."/>
            <person name="Churcher C.M."/>
            <person name="Cooper J."/>
            <person name="Haydock S."/>
            <person name="van Driessche N."/>
            <person name="Cronin A."/>
            <person name="Goodhead I."/>
            <person name="Muzny D.M."/>
            <person name="Mourier T."/>
            <person name="Pain A."/>
            <person name="Lu M."/>
            <person name="Harper D."/>
            <person name="Lindsay R."/>
            <person name="Hauser H."/>
            <person name="James K.D."/>
            <person name="Quiles M."/>
            <person name="Madan Babu M."/>
            <person name="Saito T."/>
            <person name="Buchrieser C."/>
            <person name="Wardroper A."/>
            <person name="Felder M."/>
            <person name="Thangavelu M."/>
            <person name="Johnson D."/>
            <person name="Knights A."/>
            <person name="Loulseged H."/>
            <person name="Mungall K.L."/>
            <person name="Oliver K."/>
            <person name="Price C."/>
            <person name="Quail M.A."/>
            <person name="Urushihara H."/>
            <person name="Hernandez J."/>
            <person name="Rabbinowitsch E."/>
            <person name="Steffen D."/>
            <person name="Sanders M."/>
            <person name="Ma J."/>
            <person name="Kohara Y."/>
            <person name="Sharp S."/>
            <person name="Simmonds M.N."/>
            <person name="Spiegler S."/>
            <person name="Tivey A."/>
            <person name="Sugano S."/>
            <person name="White B."/>
            <person name="Walker D."/>
            <person name="Woodward J.R."/>
            <person name="Winckler T."/>
            <person name="Tanaka Y."/>
            <person name="Shaulsky G."/>
            <person name="Schleicher M."/>
            <person name="Weinstock G.M."/>
            <person name="Rosenthal A."/>
            <person name="Cox E.C."/>
            <person name="Chisholm R.L."/>
            <person name="Gibbs R.A."/>
            <person name="Loomis W.F."/>
            <person name="Platzer M."/>
            <person name="Kay R.R."/>
            <person name="Williams J.G."/>
            <person name="Dear P.H."/>
            <person name="Noegel A.A."/>
            <person name="Barrell B.G."/>
            <person name="Kuspa A."/>
        </authorList>
    </citation>
    <scope>NUCLEOTIDE SEQUENCE [LARGE SCALE GENOMIC DNA]</scope>
    <source>
        <strain>AX4</strain>
    </source>
</reference>
<organism>
    <name type="scientific">Dictyostelium discoideum</name>
    <name type="common">Social amoeba</name>
    <dbReference type="NCBI Taxonomy" id="44689"/>
    <lineage>
        <taxon>Eukaryota</taxon>
        <taxon>Amoebozoa</taxon>
        <taxon>Evosea</taxon>
        <taxon>Eumycetozoa</taxon>
        <taxon>Dictyostelia</taxon>
        <taxon>Dictyosteliales</taxon>
        <taxon>Dictyosteliaceae</taxon>
        <taxon>Dictyostelium</taxon>
    </lineage>
</organism>
<gene>
    <name type="primary">hssl23</name>
    <name type="ORF">DDB_G0275579</name>
</gene>
<name>HSL23_DICDI</name>